<accession>C1DRG4</accession>
<protein>
    <recommendedName>
        <fullName evidence="1">Proline--tRNA ligase</fullName>
        <ecNumber evidence="1">6.1.1.15</ecNumber>
    </recommendedName>
    <alternativeName>
        <fullName evidence="1">Prolyl-tRNA synthetase</fullName>
        <shortName evidence="1">ProRS</shortName>
    </alternativeName>
</protein>
<sequence length="571" mass="63160">MRTSQYLLSTLKETPSDAVVISHQLMLRAGMIRKLASGLYTWLPLGLRALRKAEAIVREEMDKAGALEVLMPAIQPAELWQESGRWEQYGPELLRIRDRHAREFCVGPTHEEVITDLARNELNSYKQLPINFYQIQTKFRDEIRPRFGLMRGREFLMKDAYSFHLTQESLQETYDRMHQAYCNIFSRLGLEFRPVQADTGSIGGTGSHEFHVLAASGEDDIAFSDSSDYAANIEKAEAIPREKARAAASEELRLVDTPDARTIDELVRQFGLPVEKTIKTLVVQGAEEGRLVALIVRGDHELNEIKAANLEQVASPLAFASEAEIRAAIGAGPGSLGPLNLPIPAIVDRSVTLLSDFAAGANLDGKHYFGLNWERDLPLPQVADLRNVVEGDPSPDGQGSLVIKRGIEVGHIFQLGTKYSEAMNCKVLGENGKPVTLIMGCYGIGVSRVVAAAIEQNYDERGILWPQALAPFQIALVPMKYESAAVREATDRLYAELVAAGYEVLLDDRDKKTSPGVKFADMELIGIPHRIVVSERGLAEGTLEYKGRRETEVQAIPAADLITFLGNRIGR</sequence>
<organism>
    <name type="scientific">Azotobacter vinelandii (strain DJ / ATCC BAA-1303)</name>
    <dbReference type="NCBI Taxonomy" id="322710"/>
    <lineage>
        <taxon>Bacteria</taxon>
        <taxon>Pseudomonadati</taxon>
        <taxon>Pseudomonadota</taxon>
        <taxon>Gammaproteobacteria</taxon>
        <taxon>Pseudomonadales</taxon>
        <taxon>Pseudomonadaceae</taxon>
        <taxon>Azotobacter</taxon>
    </lineage>
</organism>
<dbReference type="EC" id="6.1.1.15" evidence="1"/>
<dbReference type="EMBL" id="CP001157">
    <property type="protein sequence ID" value="ACO79822.1"/>
    <property type="molecule type" value="Genomic_DNA"/>
</dbReference>
<dbReference type="RefSeq" id="WP_012702197.1">
    <property type="nucleotide sequence ID" value="NC_012560.1"/>
</dbReference>
<dbReference type="SMR" id="C1DRG4"/>
<dbReference type="STRING" id="322710.Avin_36750"/>
<dbReference type="EnsemblBacteria" id="ACO79822">
    <property type="protein sequence ID" value="ACO79822"/>
    <property type="gene ID" value="Avin_36750"/>
</dbReference>
<dbReference type="GeneID" id="88186660"/>
<dbReference type="KEGG" id="avn:Avin_36750"/>
<dbReference type="eggNOG" id="COG0442">
    <property type="taxonomic scope" value="Bacteria"/>
</dbReference>
<dbReference type="HOGENOM" id="CLU_016739_0_0_6"/>
<dbReference type="OrthoDB" id="9809052at2"/>
<dbReference type="Proteomes" id="UP000002424">
    <property type="component" value="Chromosome"/>
</dbReference>
<dbReference type="GO" id="GO:0005829">
    <property type="term" value="C:cytosol"/>
    <property type="evidence" value="ECO:0007669"/>
    <property type="project" value="TreeGrafter"/>
</dbReference>
<dbReference type="GO" id="GO:0002161">
    <property type="term" value="F:aminoacyl-tRNA deacylase activity"/>
    <property type="evidence" value="ECO:0007669"/>
    <property type="project" value="InterPro"/>
</dbReference>
<dbReference type="GO" id="GO:0005524">
    <property type="term" value="F:ATP binding"/>
    <property type="evidence" value="ECO:0007669"/>
    <property type="project" value="UniProtKB-UniRule"/>
</dbReference>
<dbReference type="GO" id="GO:0004827">
    <property type="term" value="F:proline-tRNA ligase activity"/>
    <property type="evidence" value="ECO:0007669"/>
    <property type="project" value="UniProtKB-UniRule"/>
</dbReference>
<dbReference type="GO" id="GO:0006433">
    <property type="term" value="P:prolyl-tRNA aminoacylation"/>
    <property type="evidence" value="ECO:0007669"/>
    <property type="project" value="UniProtKB-UniRule"/>
</dbReference>
<dbReference type="CDD" id="cd04334">
    <property type="entry name" value="ProRS-INS"/>
    <property type="match status" value="1"/>
</dbReference>
<dbReference type="CDD" id="cd00861">
    <property type="entry name" value="ProRS_anticodon_short"/>
    <property type="match status" value="1"/>
</dbReference>
<dbReference type="CDD" id="cd00779">
    <property type="entry name" value="ProRS_core_prok"/>
    <property type="match status" value="1"/>
</dbReference>
<dbReference type="FunFam" id="3.30.930.10:FF:000043">
    <property type="entry name" value="Proline--tRNA ligase"/>
    <property type="match status" value="1"/>
</dbReference>
<dbReference type="FunFam" id="3.30.930.10:FF:000097">
    <property type="entry name" value="Proline--tRNA ligase"/>
    <property type="match status" value="1"/>
</dbReference>
<dbReference type="FunFam" id="3.90.960.10:FF:000001">
    <property type="entry name" value="Proline--tRNA ligase"/>
    <property type="match status" value="1"/>
</dbReference>
<dbReference type="Gene3D" id="3.40.50.800">
    <property type="entry name" value="Anticodon-binding domain"/>
    <property type="match status" value="1"/>
</dbReference>
<dbReference type="Gene3D" id="3.30.930.10">
    <property type="entry name" value="Bira Bifunctional Protein, Domain 2"/>
    <property type="match status" value="2"/>
</dbReference>
<dbReference type="Gene3D" id="3.90.960.10">
    <property type="entry name" value="YbaK/aminoacyl-tRNA synthetase-associated domain"/>
    <property type="match status" value="1"/>
</dbReference>
<dbReference type="HAMAP" id="MF_01569">
    <property type="entry name" value="Pro_tRNA_synth_type1"/>
    <property type="match status" value="1"/>
</dbReference>
<dbReference type="InterPro" id="IPR002314">
    <property type="entry name" value="aa-tRNA-synt_IIb"/>
</dbReference>
<dbReference type="InterPro" id="IPR006195">
    <property type="entry name" value="aa-tRNA-synth_II"/>
</dbReference>
<dbReference type="InterPro" id="IPR045864">
    <property type="entry name" value="aa-tRNA-synth_II/BPL/LPL"/>
</dbReference>
<dbReference type="InterPro" id="IPR004154">
    <property type="entry name" value="Anticodon-bd"/>
</dbReference>
<dbReference type="InterPro" id="IPR036621">
    <property type="entry name" value="Anticodon-bd_dom_sf"/>
</dbReference>
<dbReference type="InterPro" id="IPR002316">
    <property type="entry name" value="Pro-tRNA-ligase_IIa"/>
</dbReference>
<dbReference type="InterPro" id="IPR004500">
    <property type="entry name" value="Pro-tRNA-synth_IIa_bac-type"/>
</dbReference>
<dbReference type="InterPro" id="IPR023717">
    <property type="entry name" value="Pro-tRNA-Synthase_IIa_type1"/>
</dbReference>
<dbReference type="InterPro" id="IPR050062">
    <property type="entry name" value="Pro-tRNA_synthetase"/>
</dbReference>
<dbReference type="InterPro" id="IPR044140">
    <property type="entry name" value="ProRS_anticodon_short"/>
</dbReference>
<dbReference type="InterPro" id="IPR033730">
    <property type="entry name" value="ProRS_core_prok"/>
</dbReference>
<dbReference type="InterPro" id="IPR036754">
    <property type="entry name" value="YbaK/aa-tRNA-synt-asso_dom_sf"/>
</dbReference>
<dbReference type="InterPro" id="IPR007214">
    <property type="entry name" value="YbaK/aa-tRNA-synth-assoc-dom"/>
</dbReference>
<dbReference type="NCBIfam" id="NF006625">
    <property type="entry name" value="PRK09194.1"/>
    <property type="match status" value="1"/>
</dbReference>
<dbReference type="NCBIfam" id="TIGR00409">
    <property type="entry name" value="proS_fam_II"/>
    <property type="match status" value="1"/>
</dbReference>
<dbReference type="PANTHER" id="PTHR42753">
    <property type="entry name" value="MITOCHONDRIAL RIBOSOME PROTEIN L39/PROLYL-TRNA LIGASE FAMILY MEMBER"/>
    <property type="match status" value="1"/>
</dbReference>
<dbReference type="PANTHER" id="PTHR42753:SF2">
    <property type="entry name" value="PROLINE--TRNA LIGASE"/>
    <property type="match status" value="1"/>
</dbReference>
<dbReference type="Pfam" id="PF03129">
    <property type="entry name" value="HGTP_anticodon"/>
    <property type="match status" value="1"/>
</dbReference>
<dbReference type="Pfam" id="PF00587">
    <property type="entry name" value="tRNA-synt_2b"/>
    <property type="match status" value="1"/>
</dbReference>
<dbReference type="Pfam" id="PF04073">
    <property type="entry name" value="tRNA_edit"/>
    <property type="match status" value="1"/>
</dbReference>
<dbReference type="PIRSF" id="PIRSF001535">
    <property type="entry name" value="ProRS_1"/>
    <property type="match status" value="1"/>
</dbReference>
<dbReference type="PRINTS" id="PR01046">
    <property type="entry name" value="TRNASYNTHPRO"/>
</dbReference>
<dbReference type="SUPFAM" id="SSF52954">
    <property type="entry name" value="Class II aaRS ABD-related"/>
    <property type="match status" value="1"/>
</dbReference>
<dbReference type="SUPFAM" id="SSF55681">
    <property type="entry name" value="Class II aaRS and biotin synthetases"/>
    <property type="match status" value="1"/>
</dbReference>
<dbReference type="SUPFAM" id="SSF55826">
    <property type="entry name" value="YbaK/ProRS associated domain"/>
    <property type="match status" value="1"/>
</dbReference>
<dbReference type="PROSITE" id="PS50862">
    <property type="entry name" value="AA_TRNA_LIGASE_II"/>
    <property type="match status" value="1"/>
</dbReference>
<gene>
    <name evidence="1" type="primary">proS</name>
    <name type="ordered locus">Avin_36750</name>
</gene>
<keyword id="KW-0030">Aminoacyl-tRNA synthetase</keyword>
<keyword id="KW-0067">ATP-binding</keyword>
<keyword id="KW-0963">Cytoplasm</keyword>
<keyword id="KW-0436">Ligase</keyword>
<keyword id="KW-0547">Nucleotide-binding</keyword>
<keyword id="KW-0648">Protein biosynthesis</keyword>
<comment type="function">
    <text evidence="1">Catalyzes the attachment of proline to tRNA(Pro) in a two-step reaction: proline is first activated by ATP to form Pro-AMP and then transferred to the acceptor end of tRNA(Pro). As ProRS can inadvertently accommodate and process non-cognate amino acids such as alanine and cysteine, to avoid such errors it has two additional distinct editing activities against alanine. One activity is designated as 'pretransfer' editing and involves the tRNA(Pro)-independent hydrolysis of activated Ala-AMP. The other activity is designated 'posttransfer' editing and involves deacylation of mischarged Ala-tRNA(Pro). The misacylated Cys-tRNA(Pro) is not edited by ProRS.</text>
</comment>
<comment type="catalytic activity">
    <reaction evidence="1">
        <text>tRNA(Pro) + L-proline + ATP = L-prolyl-tRNA(Pro) + AMP + diphosphate</text>
        <dbReference type="Rhea" id="RHEA:14305"/>
        <dbReference type="Rhea" id="RHEA-COMP:9700"/>
        <dbReference type="Rhea" id="RHEA-COMP:9702"/>
        <dbReference type="ChEBI" id="CHEBI:30616"/>
        <dbReference type="ChEBI" id="CHEBI:33019"/>
        <dbReference type="ChEBI" id="CHEBI:60039"/>
        <dbReference type="ChEBI" id="CHEBI:78442"/>
        <dbReference type="ChEBI" id="CHEBI:78532"/>
        <dbReference type="ChEBI" id="CHEBI:456215"/>
        <dbReference type="EC" id="6.1.1.15"/>
    </reaction>
</comment>
<comment type="subunit">
    <text evidence="1">Homodimer.</text>
</comment>
<comment type="subcellular location">
    <subcellularLocation>
        <location evidence="1">Cytoplasm</location>
    </subcellularLocation>
</comment>
<comment type="domain">
    <text evidence="1">Consists of three domains: the N-terminal catalytic domain, the editing domain and the C-terminal anticodon-binding domain.</text>
</comment>
<comment type="similarity">
    <text evidence="1">Belongs to the class-II aminoacyl-tRNA synthetase family. ProS type 1 subfamily.</text>
</comment>
<reference key="1">
    <citation type="journal article" date="2009" name="J. Bacteriol.">
        <title>Genome sequence of Azotobacter vinelandii, an obligate aerobe specialized to support diverse anaerobic metabolic processes.</title>
        <authorList>
            <person name="Setubal J.C."/>
            <person name="Dos Santos P."/>
            <person name="Goldman B.S."/>
            <person name="Ertesvaag H."/>
            <person name="Espin G."/>
            <person name="Rubio L.M."/>
            <person name="Valla S."/>
            <person name="Almeida N.F."/>
            <person name="Balasubramanian D."/>
            <person name="Cromes L."/>
            <person name="Curatti L."/>
            <person name="Du Z."/>
            <person name="Godsy E."/>
            <person name="Goodner B."/>
            <person name="Hellner-Burris K."/>
            <person name="Hernandez J.A."/>
            <person name="Houmiel K."/>
            <person name="Imperial J."/>
            <person name="Kennedy C."/>
            <person name="Larson T.J."/>
            <person name="Latreille P."/>
            <person name="Ligon L.S."/>
            <person name="Lu J."/>
            <person name="Maerk M."/>
            <person name="Miller N.M."/>
            <person name="Norton S."/>
            <person name="O'Carroll I.P."/>
            <person name="Paulsen I."/>
            <person name="Raulfs E.C."/>
            <person name="Roemer R."/>
            <person name="Rosser J."/>
            <person name="Segura D."/>
            <person name="Slater S."/>
            <person name="Stricklin S.L."/>
            <person name="Studholme D.J."/>
            <person name="Sun J."/>
            <person name="Viana C.J."/>
            <person name="Wallin E."/>
            <person name="Wang B."/>
            <person name="Wheeler C."/>
            <person name="Zhu H."/>
            <person name="Dean D.R."/>
            <person name="Dixon R."/>
            <person name="Wood D."/>
        </authorList>
    </citation>
    <scope>NUCLEOTIDE SEQUENCE [LARGE SCALE GENOMIC DNA]</scope>
    <source>
        <strain>DJ / ATCC BAA-1303</strain>
    </source>
</reference>
<name>SYP_AZOVD</name>
<proteinExistence type="inferred from homology"/>
<evidence type="ECO:0000255" key="1">
    <source>
        <dbReference type="HAMAP-Rule" id="MF_01569"/>
    </source>
</evidence>
<feature type="chain" id="PRO_1000215524" description="Proline--tRNA ligase">
    <location>
        <begin position="1"/>
        <end position="571"/>
    </location>
</feature>